<protein>
    <recommendedName>
        <fullName>Nuclear protein UL4 homolog</fullName>
    </recommendedName>
</protein>
<dbReference type="EMBL" id="AY464052">
    <property type="protein sequence ID" value="AAS45942.1"/>
    <property type="molecule type" value="Genomic_DNA"/>
</dbReference>
<dbReference type="KEGG" id="vg:2948566"/>
<dbReference type="Proteomes" id="UP000008296">
    <property type="component" value="Segment"/>
</dbReference>
<dbReference type="GO" id="GO:0042025">
    <property type="term" value="C:host cell nucleus"/>
    <property type="evidence" value="ECO:0007669"/>
    <property type="project" value="UniProtKB-SubCell"/>
</dbReference>
<dbReference type="InterPro" id="IPR004958">
    <property type="entry name" value="Herpes_UL4"/>
</dbReference>
<dbReference type="Pfam" id="PF03277">
    <property type="entry name" value="Herpes_UL4"/>
    <property type="match status" value="1"/>
</dbReference>
<feature type="chain" id="PRO_0000115901" description="Nuclear protein UL4 homolog">
    <location>
        <begin position="1"/>
        <end position="225"/>
    </location>
</feature>
<name>NP04_EHV1V</name>
<accession>P84457</accession>
<accession>Q6S6U6</accession>
<organismHost>
    <name type="scientific">Equus caballus</name>
    <name type="common">Horse</name>
    <dbReference type="NCBI Taxonomy" id="9796"/>
</organismHost>
<comment type="subcellular location">
    <subcellularLocation>
        <location evidence="1">Host nucleus</location>
    </subcellularLocation>
</comment>
<comment type="similarity">
    <text evidence="2">Belongs to the alphaherpesvirinae HHV-1 UL4 family.</text>
</comment>
<reference evidence="2 3" key="1">
    <citation type="submission" date="2003-11" db="EMBL/GenBank/DDBJ databases">
        <authorList>
            <person name="Davis-Poynter N."/>
            <person name="Nugent J."/>
            <person name="Birch-Machin I."/>
            <person name="Allen G.P."/>
        </authorList>
    </citation>
    <scope>NUCLEOTIDE SEQUENCE [LARGE SCALE GENOMIC DNA]</scope>
</reference>
<organism>
    <name type="scientific">Equine herpesvirus 1 (strain V592)</name>
    <name type="common">EHV-1</name>
    <name type="synonym">Equine abortion virus</name>
    <dbReference type="NCBI Taxonomy" id="310273"/>
    <lineage>
        <taxon>Viruses</taxon>
        <taxon>Duplodnaviria</taxon>
        <taxon>Heunggongvirae</taxon>
        <taxon>Peploviricota</taxon>
        <taxon>Herviviricetes</taxon>
        <taxon>Herpesvirales</taxon>
        <taxon>Orthoherpesviridae</taxon>
        <taxon>Alphaherpesvirinae</taxon>
        <taxon>Varicellovirus</taxon>
        <taxon>Varicellovirus equidalpha1</taxon>
        <taxon>Equid alphaherpesvirus 1</taxon>
    </lineage>
</organism>
<proteinExistence type="inferred from homology"/>
<evidence type="ECO:0000250" key="1"/>
<evidence type="ECO:0000305" key="2"/>
<evidence type="ECO:0000312" key="3">
    <source>
        <dbReference type="EMBL" id="AAS45942.1"/>
    </source>
</evidence>
<keyword id="KW-1048">Host nucleus</keyword>
<gene>
    <name type="ordered locus">58</name>
</gene>
<sequence>METCSPPVTFITYALYGIKTSPAWTLPNFEQVICSCDWGYRLIAVGAESKCDVTPQGSFVIQHGASITALVLDCGVEFCSYAFTHAENTRVPLTTEDGSVLVVPFCGWVCVGRDRCLRSMSGGVLTISWDTSQTAYISVAVYRPPTLQCHALDCTRAETTVCSTAAITDASESDPLYADQEGDQTQDQDGGHDFLETILMESDLYGTNGASALLEPCFPCLSNND</sequence>